<protein>
    <recommendedName>
        <fullName evidence="1">Redox-sensing transcriptional repressor Rex</fullName>
    </recommendedName>
</protein>
<organism>
    <name type="scientific">Limosilactobacillus reuteri subsp. reuteri (strain JCM 1112)</name>
    <name type="common">Lactobacillus reuteri</name>
    <dbReference type="NCBI Taxonomy" id="557433"/>
    <lineage>
        <taxon>Bacteria</taxon>
        <taxon>Bacillati</taxon>
        <taxon>Bacillota</taxon>
        <taxon>Bacilli</taxon>
        <taxon>Lactobacillales</taxon>
        <taxon>Lactobacillaceae</taxon>
        <taxon>Limosilactobacillus</taxon>
    </lineage>
</organism>
<dbReference type="EMBL" id="AP007281">
    <property type="protein sequence ID" value="BAG24857.1"/>
    <property type="molecule type" value="Genomic_DNA"/>
</dbReference>
<dbReference type="RefSeq" id="WP_003667422.1">
    <property type="nucleotide sequence ID" value="NC_010609.1"/>
</dbReference>
<dbReference type="SMR" id="B2G5X5"/>
<dbReference type="KEGG" id="lrf:LAR_0341"/>
<dbReference type="HOGENOM" id="CLU_061534_1_1_9"/>
<dbReference type="GO" id="GO:0005737">
    <property type="term" value="C:cytoplasm"/>
    <property type="evidence" value="ECO:0007669"/>
    <property type="project" value="UniProtKB-SubCell"/>
</dbReference>
<dbReference type="GO" id="GO:0003677">
    <property type="term" value="F:DNA binding"/>
    <property type="evidence" value="ECO:0007669"/>
    <property type="project" value="UniProtKB-UniRule"/>
</dbReference>
<dbReference type="GO" id="GO:0003700">
    <property type="term" value="F:DNA-binding transcription factor activity"/>
    <property type="evidence" value="ECO:0007669"/>
    <property type="project" value="UniProtKB-UniRule"/>
</dbReference>
<dbReference type="GO" id="GO:0045892">
    <property type="term" value="P:negative regulation of DNA-templated transcription"/>
    <property type="evidence" value="ECO:0007669"/>
    <property type="project" value="InterPro"/>
</dbReference>
<dbReference type="GO" id="GO:0051775">
    <property type="term" value="P:response to redox state"/>
    <property type="evidence" value="ECO:0007669"/>
    <property type="project" value="InterPro"/>
</dbReference>
<dbReference type="Gene3D" id="3.40.50.720">
    <property type="entry name" value="NAD(P)-binding Rossmann-like Domain"/>
    <property type="match status" value="1"/>
</dbReference>
<dbReference type="Gene3D" id="1.10.10.10">
    <property type="entry name" value="Winged helix-like DNA-binding domain superfamily/Winged helix DNA-binding domain"/>
    <property type="match status" value="1"/>
</dbReference>
<dbReference type="HAMAP" id="MF_01131">
    <property type="entry name" value="Rex"/>
    <property type="match status" value="1"/>
</dbReference>
<dbReference type="InterPro" id="IPR003781">
    <property type="entry name" value="CoA-bd"/>
</dbReference>
<dbReference type="InterPro" id="IPR036291">
    <property type="entry name" value="NAD(P)-bd_dom_sf"/>
</dbReference>
<dbReference type="InterPro" id="IPR009718">
    <property type="entry name" value="Rex_DNA-bd_C_dom"/>
</dbReference>
<dbReference type="InterPro" id="IPR022876">
    <property type="entry name" value="Tscrpt_rep_Rex"/>
</dbReference>
<dbReference type="InterPro" id="IPR036388">
    <property type="entry name" value="WH-like_DNA-bd_sf"/>
</dbReference>
<dbReference type="InterPro" id="IPR036390">
    <property type="entry name" value="WH_DNA-bd_sf"/>
</dbReference>
<dbReference type="NCBIfam" id="NF003989">
    <property type="entry name" value="PRK05472.1-3"/>
    <property type="match status" value="1"/>
</dbReference>
<dbReference type="NCBIfam" id="NF003991">
    <property type="entry name" value="PRK05472.1-5"/>
    <property type="match status" value="1"/>
</dbReference>
<dbReference type="NCBIfam" id="NF003994">
    <property type="entry name" value="PRK05472.2-3"/>
    <property type="match status" value="1"/>
</dbReference>
<dbReference type="NCBIfam" id="NF003995">
    <property type="entry name" value="PRK05472.2-4"/>
    <property type="match status" value="1"/>
</dbReference>
<dbReference type="NCBIfam" id="NF003996">
    <property type="entry name" value="PRK05472.2-5"/>
    <property type="match status" value="1"/>
</dbReference>
<dbReference type="PANTHER" id="PTHR35786">
    <property type="entry name" value="REDOX-SENSING TRANSCRIPTIONAL REPRESSOR REX"/>
    <property type="match status" value="1"/>
</dbReference>
<dbReference type="PANTHER" id="PTHR35786:SF1">
    <property type="entry name" value="REDOX-SENSING TRANSCRIPTIONAL REPRESSOR REX 1"/>
    <property type="match status" value="1"/>
</dbReference>
<dbReference type="Pfam" id="PF02629">
    <property type="entry name" value="CoA_binding"/>
    <property type="match status" value="1"/>
</dbReference>
<dbReference type="Pfam" id="PF06971">
    <property type="entry name" value="Put_DNA-bind_N"/>
    <property type="match status" value="1"/>
</dbReference>
<dbReference type="SMART" id="SM00881">
    <property type="entry name" value="CoA_binding"/>
    <property type="match status" value="1"/>
</dbReference>
<dbReference type="SUPFAM" id="SSF51735">
    <property type="entry name" value="NAD(P)-binding Rossmann-fold domains"/>
    <property type="match status" value="1"/>
</dbReference>
<dbReference type="SUPFAM" id="SSF46785">
    <property type="entry name" value="Winged helix' DNA-binding domain"/>
    <property type="match status" value="1"/>
</dbReference>
<comment type="function">
    <text evidence="1">Modulates transcription in response to changes in cellular NADH/NAD(+) redox state.</text>
</comment>
<comment type="subunit">
    <text evidence="1">Homodimer.</text>
</comment>
<comment type="subcellular location">
    <subcellularLocation>
        <location evidence="1">Cytoplasm</location>
    </subcellularLocation>
</comment>
<comment type="similarity">
    <text evidence="1">Belongs to the transcriptional regulatory Rex family.</text>
</comment>
<reference key="1">
    <citation type="journal article" date="2008" name="DNA Res.">
        <title>Comparative genome analysis of Lactobacillus reuteri and Lactobacillus fermentum reveal a genomic island for reuterin and cobalamin production.</title>
        <authorList>
            <person name="Morita H."/>
            <person name="Toh H."/>
            <person name="Fukuda S."/>
            <person name="Horikawa H."/>
            <person name="Oshima K."/>
            <person name="Suzuki T."/>
            <person name="Murakami M."/>
            <person name="Hisamatsu S."/>
            <person name="Kato Y."/>
            <person name="Takizawa T."/>
            <person name="Fukuoka H."/>
            <person name="Yoshimura T."/>
            <person name="Itoh K."/>
            <person name="O'Sullivan D.J."/>
            <person name="McKay L.L."/>
            <person name="Ohno H."/>
            <person name="Kikuchi J."/>
            <person name="Masaoka T."/>
            <person name="Hattori M."/>
        </authorList>
    </citation>
    <scope>NUCLEOTIDE SEQUENCE [LARGE SCALE GENOMIC DNA]</scope>
    <source>
        <strain>JCM 1112</strain>
    </source>
</reference>
<feature type="chain" id="PRO_1000137327" description="Redox-sensing transcriptional repressor Rex">
    <location>
        <begin position="1"/>
        <end position="214"/>
    </location>
</feature>
<feature type="DNA-binding region" description="H-T-H motif" evidence="1">
    <location>
        <begin position="16"/>
        <end position="55"/>
    </location>
</feature>
<feature type="binding site" evidence="1">
    <location>
        <begin position="90"/>
        <end position="95"/>
    </location>
    <ligand>
        <name>NAD(+)</name>
        <dbReference type="ChEBI" id="CHEBI:57540"/>
    </ligand>
</feature>
<gene>
    <name evidence="1" type="primary">rex</name>
    <name type="ordered locus">LAR_0341</name>
</gene>
<accession>B2G5X5</accession>
<evidence type="ECO:0000255" key="1">
    <source>
        <dbReference type="HAMAP-Rule" id="MF_01131"/>
    </source>
</evidence>
<proteinExistence type="inferred from homology"/>
<keyword id="KW-0963">Cytoplasm</keyword>
<keyword id="KW-0238">DNA-binding</keyword>
<keyword id="KW-0520">NAD</keyword>
<keyword id="KW-0678">Repressor</keyword>
<keyword id="KW-0804">Transcription</keyword>
<keyword id="KW-0805">Transcription regulation</keyword>
<sequence length="214" mass="23940">MANKKIPRATAKRLPIYFRYLNVLKDANKQRVSSTELSEAVQVDSATIRRDFSYFGELGKRGYGYDVESLLKFFKGILHQDSLVSVALVGVGSLGSALLNFNFHQDTNLRISAAFDTKPEYANTVKSGIPIYPSEDMVKQLKEQQIDVVILTVPGIKAQHVADQLVEAGVKGILNFTPVRLSVPKNVQVQNIDLTNELQTLIYFIKNYTEDSIK</sequence>
<name>REX_LIMRJ</name>